<comment type="function">
    <text evidence="1">Catalyzes the degradation of hydrogen peroxide (H(2)O(2)) generated by peroxisomal oxidases to water and oxygen, thereby protecting cells from the toxic effects of hydrogen peroxide.</text>
</comment>
<comment type="catalytic activity">
    <reaction evidence="2">
        <text>2 H2O2 = O2 + 2 H2O</text>
        <dbReference type="Rhea" id="RHEA:20309"/>
        <dbReference type="ChEBI" id="CHEBI:15377"/>
        <dbReference type="ChEBI" id="CHEBI:15379"/>
        <dbReference type="ChEBI" id="CHEBI:16240"/>
        <dbReference type="EC" id="1.11.1.6"/>
    </reaction>
</comment>
<comment type="cofactor">
    <cofactor evidence="1">
        <name>heme</name>
        <dbReference type="ChEBI" id="CHEBI:30413"/>
    </cofactor>
</comment>
<comment type="subcellular location">
    <subcellularLocation>
        <location evidence="1">Peroxisome matrix</location>
    </subcellularLocation>
</comment>
<comment type="similarity">
    <text evidence="4">Belongs to the catalase family.</text>
</comment>
<dbReference type="EC" id="1.11.1.6" evidence="2"/>
<dbReference type="EMBL" id="Y10611">
    <property type="protein sequence ID" value="CAA71618.1"/>
    <property type="molecule type" value="mRNA"/>
</dbReference>
<dbReference type="SMR" id="P90682"/>
<dbReference type="GO" id="GO:0005739">
    <property type="term" value="C:mitochondrion"/>
    <property type="evidence" value="ECO:0007669"/>
    <property type="project" value="TreeGrafter"/>
</dbReference>
<dbReference type="GO" id="GO:0005782">
    <property type="term" value="C:peroxisomal matrix"/>
    <property type="evidence" value="ECO:0007669"/>
    <property type="project" value="UniProtKB-SubCell"/>
</dbReference>
<dbReference type="GO" id="GO:0004096">
    <property type="term" value="F:catalase activity"/>
    <property type="evidence" value="ECO:0007669"/>
    <property type="project" value="UniProtKB-EC"/>
</dbReference>
<dbReference type="GO" id="GO:0020037">
    <property type="term" value="F:heme binding"/>
    <property type="evidence" value="ECO:0007669"/>
    <property type="project" value="InterPro"/>
</dbReference>
<dbReference type="GO" id="GO:0046872">
    <property type="term" value="F:metal ion binding"/>
    <property type="evidence" value="ECO:0007669"/>
    <property type="project" value="UniProtKB-KW"/>
</dbReference>
<dbReference type="GO" id="GO:0042744">
    <property type="term" value="P:hydrogen peroxide catabolic process"/>
    <property type="evidence" value="ECO:0007669"/>
    <property type="project" value="UniProtKB-KW"/>
</dbReference>
<dbReference type="GO" id="GO:0042542">
    <property type="term" value="P:response to hydrogen peroxide"/>
    <property type="evidence" value="ECO:0007669"/>
    <property type="project" value="TreeGrafter"/>
</dbReference>
<dbReference type="CDD" id="cd08156">
    <property type="entry name" value="catalase_clade_3"/>
    <property type="match status" value="1"/>
</dbReference>
<dbReference type="FunFam" id="2.40.180.10:FF:000001">
    <property type="entry name" value="Catalase"/>
    <property type="match status" value="1"/>
</dbReference>
<dbReference type="Gene3D" id="2.40.180.10">
    <property type="entry name" value="Catalase core domain"/>
    <property type="match status" value="1"/>
</dbReference>
<dbReference type="InterPro" id="IPR018028">
    <property type="entry name" value="Catalase"/>
</dbReference>
<dbReference type="InterPro" id="IPR040333">
    <property type="entry name" value="Catalase_3"/>
</dbReference>
<dbReference type="InterPro" id="IPR024708">
    <property type="entry name" value="Catalase_AS"/>
</dbReference>
<dbReference type="InterPro" id="IPR024711">
    <property type="entry name" value="Catalase_clade1/3"/>
</dbReference>
<dbReference type="InterPro" id="IPR011614">
    <property type="entry name" value="Catalase_core"/>
</dbReference>
<dbReference type="InterPro" id="IPR002226">
    <property type="entry name" value="Catalase_haem_BS"/>
</dbReference>
<dbReference type="InterPro" id="IPR010582">
    <property type="entry name" value="Catalase_immune_responsive"/>
</dbReference>
<dbReference type="InterPro" id="IPR020835">
    <property type="entry name" value="Catalase_sf"/>
</dbReference>
<dbReference type="PANTHER" id="PTHR11465">
    <property type="entry name" value="CATALASE"/>
    <property type="match status" value="1"/>
</dbReference>
<dbReference type="PANTHER" id="PTHR11465:SF9">
    <property type="entry name" value="CATALASE"/>
    <property type="match status" value="1"/>
</dbReference>
<dbReference type="Pfam" id="PF00199">
    <property type="entry name" value="Catalase"/>
    <property type="match status" value="1"/>
</dbReference>
<dbReference type="Pfam" id="PF06628">
    <property type="entry name" value="Catalase-rel"/>
    <property type="match status" value="1"/>
</dbReference>
<dbReference type="PIRSF" id="PIRSF038928">
    <property type="entry name" value="Catalase_clade1-3"/>
    <property type="match status" value="1"/>
</dbReference>
<dbReference type="PRINTS" id="PR00067">
    <property type="entry name" value="CATALASE"/>
</dbReference>
<dbReference type="SMART" id="SM01060">
    <property type="entry name" value="Catalase"/>
    <property type="match status" value="1"/>
</dbReference>
<dbReference type="SUPFAM" id="SSF56634">
    <property type="entry name" value="Heme-dependent catalase-like"/>
    <property type="match status" value="1"/>
</dbReference>
<dbReference type="PROSITE" id="PS00437">
    <property type="entry name" value="CATALASE_1"/>
    <property type="match status" value="1"/>
</dbReference>
<dbReference type="PROSITE" id="PS00438">
    <property type="entry name" value="CATALASE_2"/>
    <property type="match status" value="1"/>
</dbReference>
<dbReference type="PROSITE" id="PS51402">
    <property type="entry name" value="CATALASE_3"/>
    <property type="match status" value="1"/>
</dbReference>
<reference key="1">
    <citation type="submission" date="1997-07" db="EMBL/GenBank/DDBJ databases">
        <authorList>
            <person name="Eckelt V.H.O."/>
        </authorList>
    </citation>
    <scope>NUCLEOTIDE SEQUENCE [MRNA]</scope>
</reference>
<name>CATA_ASCSU</name>
<accession>P90682</accession>
<feature type="chain" id="PRO_0000084908" description="Catalase">
    <location>
        <begin position="1"/>
        <end position="541"/>
    </location>
</feature>
<feature type="region of interest" description="Disordered" evidence="3">
    <location>
        <begin position="1"/>
        <end position="20"/>
    </location>
</feature>
<feature type="active site" evidence="2">
    <location>
        <position position="74"/>
    </location>
</feature>
<feature type="active site" evidence="2">
    <location>
        <position position="147"/>
    </location>
</feature>
<feature type="binding site" description="axial binding residue" evidence="1">
    <location>
        <position position="357"/>
    </location>
    <ligand>
        <name>heme</name>
        <dbReference type="ChEBI" id="CHEBI:30413"/>
    </ligand>
    <ligandPart>
        <name>Fe</name>
        <dbReference type="ChEBI" id="CHEBI:18248"/>
    </ligandPart>
</feature>
<protein>
    <recommendedName>
        <fullName>Catalase</fullName>
        <ecNumber evidence="2">1.11.1.6</ecNumber>
    </recommendedName>
</protein>
<evidence type="ECO:0000250" key="1">
    <source>
        <dbReference type="UniProtKB" id="P04040"/>
    </source>
</evidence>
<evidence type="ECO:0000255" key="2">
    <source>
        <dbReference type="PROSITE-ProRule" id="PRU10013"/>
    </source>
</evidence>
<evidence type="ECO:0000256" key="3">
    <source>
        <dbReference type="SAM" id="MobiDB-lite"/>
    </source>
</evidence>
<evidence type="ECO:0000305" key="4"/>
<gene>
    <name type="primary">CAT</name>
</gene>
<keyword id="KW-0349">Heme</keyword>
<keyword id="KW-0376">Hydrogen peroxide</keyword>
<keyword id="KW-0408">Iron</keyword>
<keyword id="KW-0479">Metal-binding</keyword>
<keyword id="KW-0560">Oxidoreductase</keyword>
<keyword id="KW-0575">Peroxidase</keyword>
<keyword id="KW-0576">Peroxisome</keyword>
<organism>
    <name type="scientific">Ascaris suum</name>
    <name type="common">Pig roundworm</name>
    <name type="synonym">Ascaris lumbricoides</name>
    <dbReference type="NCBI Taxonomy" id="6253"/>
    <lineage>
        <taxon>Eukaryota</taxon>
        <taxon>Metazoa</taxon>
        <taxon>Ecdysozoa</taxon>
        <taxon>Nematoda</taxon>
        <taxon>Chromadorea</taxon>
        <taxon>Rhabditida</taxon>
        <taxon>Spirurina</taxon>
        <taxon>Ascaridomorpha</taxon>
        <taxon>Ascaridoidea</taxon>
        <taxon>Ascarididae</taxon>
        <taxon>Ascaris</taxon>
    </lineage>
</organism>
<sequence>MPQTKGKPHEEQLEQYKNSQTKPFVLTTSNGAPIFNKKASLTVGPRGPLLLQDVVFLDEMAHFDRERIPERVVHAKGGGAHGFFEVTDDITKYCKADVFSTIGKRTPIFIRFSTVGGELGSADTQRDPRGFAIKFYTEEGNWDLVGNNTPIFFIRDPIFFPNFIHTQKRNPVTHLKDPNMMWDFFSLRPETTHQVMILFGDRGIPDGFRHMDGFGSHTFKLVNKDGNAVYCKFHIKTAQGIRNLPPDVAIKLAGEDPDYSIRDLYDSIENGNYPVWRLMIQVMTFEEAANYRFNPFDITKVWSHKEFPLILVGKIVLNKNPTNYFAEVEQIAFAPSHVVPGIEFSPDKMLQGRLFAYPDTQFHRLGPNYVQLPINCPYRSRAHNTQRDGCFALDYNQGGMPTYHPNSFNGAIERTDVKESAWSVSGDVDRFNGDDEDNFSQPRDLWLKVMDETERARLVDNIADSLKYCKAFIQERAINNFTQVHQDFGNALRNALQKANEAMQKKREEEAEFNAKESVMMPCAIDDRMKNISNLAKYCKY</sequence>
<proteinExistence type="evidence at transcript level"/>